<gene>
    <name type="ordered locus">Mevan_1624</name>
</gene>
<accession>A6USP4</accession>
<reference key="1">
    <citation type="submission" date="2007-06" db="EMBL/GenBank/DDBJ databases">
        <title>Complete sequence of Methanococcus vannielii SB.</title>
        <authorList>
            <consortium name="US DOE Joint Genome Institute"/>
            <person name="Copeland A."/>
            <person name="Lucas S."/>
            <person name="Lapidus A."/>
            <person name="Barry K."/>
            <person name="Glavina del Rio T."/>
            <person name="Dalin E."/>
            <person name="Tice H."/>
            <person name="Pitluck S."/>
            <person name="Chain P."/>
            <person name="Malfatti S."/>
            <person name="Shin M."/>
            <person name="Vergez L."/>
            <person name="Schmutz J."/>
            <person name="Larimer F."/>
            <person name="Land M."/>
            <person name="Hauser L."/>
            <person name="Kyrpides N."/>
            <person name="Anderson I."/>
            <person name="Sieprawska-Lupa M."/>
            <person name="Whitman W.B."/>
            <person name="Richardson P."/>
        </authorList>
    </citation>
    <scope>NUCLEOTIDE SEQUENCE [LARGE SCALE GENOMIC DNA]</scope>
    <source>
        <strain>ATCC 35089 / DSM 1224 / JCM 13029 / OCM 148 / SB</strain>
    </source>
</reference>
<sequence>MLTTTQDKFEDFEIEKTIGLVRGNTIRTKNIGYDLVASLRTIVGGEIPEYTKMMNESREEAFKRMIQEAQMLGADAVVGLRFGTSSVLPGSAEFLCYGTAVTLKK</sequence>
<evidence type="ECO:0000255" key="1">
    <source>
        <dbReference type="HAMAP-Rule" id="MF_00338"/>
    </source>
</evidence>
<comment type="similarity">
    <text evidence="1">Belongs to the UPF0145 family.</text>
</comment>
<feature type="chain" id="PRO_1000013016" description="UPF0145 protein Mevan_1624">
    <location>
        <begin position="1"/>
        <end position="105"/>
    </location>
</feature>
<name>Y1624_METVS</name>
<organism>
    <name type="scientific">Methanococcus vannielii (strain ATCC 35089 / DSM 1224 / JCM 13029 / OCM 148 / SB)</name>
    <dbReference type="NCBI Taxonomy" id="406327"/>
    <lineage>
        <taxon>Archaea</taxon>
        <taxon>Methanobacteriati</taxon>
        <taxon>Methanobacteriota</taxon>
        <taxon>Methanomada group</taxon>
        <taxon>Methanococci</taxon>
        <taxon>Methanococcales</taxon>
        <taxon>Methanococcaceae</taxon>
        <taxon>Methanococcus</taxon>
    </lineage>
</organism>
<proteinExistence type="inferred from homology"/>
<dbReference type="EMBL" id="CP000742">
    <property type="protein sequence ID" value="ABR55516.1"/>
    <property type="molecule type" value="Genomic_DNA"/>
</dbReference>
<dbReference type="RefSeq" id="WP_012066430.1">
    <property type="nucleotide sequence ID" value="NC_009634.1"/>
</dbReference>
<dbReference type="SMR" id="A6USP4"/>
<dbReference type="STRING" id="406327.Mevan_1624"/>
<dbReference type="GeneID" id="5326152"/>
<dbReference type="KEGG" id="mvn:Mevan_1624"/>
<dbReference type="eggNOG" id="arCOG02287">
    <property type="taxonomic scope" value="Archaea"/>
</dbReference>
<dbReference type="HOGENOM" id="CLU_117144_1_2_2"/>
<dbReference type="OrthoDB" id="59443at2157"/>
<dbReference type="Proteomes" id="UP000001107">
    <property type="component" value="Chromosome"/>
</dbReference>
<dbReference type="Gene3D" id="3.30.110.70">
    <property type="entry name" value="Hypothetical protein apc22750. Chain B"/>
    <property type="match status" value="1"/>
</dbReference>
<dbReference type="HAMAP" id="MF_00338">
    <property type="entry name" value="UPF0145"/>
    <property type="match status" value="1"/>
</dbReference>
<dbReference type="InterPro" id="IPR035439">
    <property type="entry name" value="UPF0145_dom_sf"/>
</dbReference>
<dbReference type="InterPro" id="IPR002765">
    <property type="entry name" value="UPF0145_YbjQ-like"/>
</dbReference>
<dbReference type="PANTHER" id="PTHR34068:SF2">
    <property type="entry name" value="UPF0145 PROTEIN SCO3412"/>
    <property type="match status" value="1"/>
</dbReference>
<dbReference type="PANTHER" id="PTHR34068">
    <property type="entry name" value="UPF0145 PROTEIN YBJQ"/>
    <property type="match status" value="1"/>
</dbReference>
<dbReference type="Pfam" id="PF01906">
    <property type="entry name" value="YbjQ_1"/>
    <property type="match status" value="1"/>
</dbReference>
<dbReference type="SUPFAM" id="SSF117782">
    <property type="entry name" value="YbjQ-like"/>
    <property type="match status" value="1"/>
</dbReference>
<protein>
    <recommendedName>
        <fullName evidence="1">UPF0145 protein Mevan_1624</fullName>
    </recommendedName>
</protein>